<keyword id="KW-0665">Pyrimidine biosynthesis</keyword>
<keyword id="KW-0808">Transferase</keyword>
<accession>Q11IM0</accession>
<comment type="function">
    <text evidence="1">Catalyzes the condensation of carbamoyl phosphate and aspartate to form carbamoyl aspartate and inorganic phosphate, the committed step in the de novo pyrimidine nucleotide biosynthesis pathway.</text>
</comment>
<comment type="catalytic activity">
    <reaction evidence="1">
        <text>carbamoyl phosphate + L-aspartate = N-carbamoyl-L-aspartate + phosphate + H(+)</text>
        <dbReference type="Rhea" id="RHEA:20013"/>
        <dbReference type="ChEBI" id="CHEBI:15378"/>
        <dbReference type="ChEBI" id="CHEBI:29991"/>
        <dbReference type="ChEBI" id="CHEBI:32814"/>
        <dbReference type="ChEBI" id="CHEBI:43474"/>
        <dbReference type="ChEBI" id="CHEBI:58228"/>
        <dbReference type="EC" id="2.1.3.2"/>
    </reaction>
</comment>
<comment type="pathway">
    <text evidence="1">Pyrimidine metabolism; UMP biosynthesis via de novo pathway; (S)-dihydroorotate from bicarbonate: step 2/3.</text>
</comment>
<comment type="subunit">
    <text evidence="1">Heterododecamer (2C3:3R2) of six catalytic PyrB chains organized as two trimers (C3), and six regulatory PyrI chains organized as three dimers (R2).</text>
</comment>
<comment type="similarity">
    <text evidence="1">Belongs to the aspartate/ornithine carbamoyltransferase superfamily. ATCase family.</text>
</comment>
<dbReference type="EC" id="2.1.3.2" evidence="1"/>
<dbReference type="EMBL" id="CP000390">
    <property type="protein sequence ID" value="ABG62755.1"/>
    <property type="molecule type" value="Genomic_DNA"/>
</dbReference>
<dbReference type="SMR" id="Q11IM0"/>
<dbReference type="STRING" id="266779.Meso_1359"/>
<dbReference type="KEGG" id="mes:Meso_1359"/>
<dbReference type="eggNOG" id="COG0540">
    <property type="taxonomic scope" value="Bacteria"/>
</dbReference>
<dbReference type="HOGENOM" id="CLU_043846_2_0_5"/>
<dbReference type="OrthoDB" id="9774690at2"/>
<dbReference type="UniPathway" id="UPA00070">
    <property type="reaction ID" value="UER00116"/>
</dbReference>
<dbReference type="GO" id="GO:0005829">
    <property type="term" value="C:cytosol"/>
    <property type="evidence" value="ECO:0007669"/>
    <property type="project" value="TreeGrafter"/>
</dbReference>
<dbReference type="GO" id="GO:0016597">
    <property type="term" value="F:amino acid binding"/>
    <property type="evidence" value="ECO:0007669"/>
    <property type="project" value="InterPro"/>
</dbReference>
<dbReference type="GO" id="GO:0004070">
    <property type="term" value="F:aspartate carbamoyltransferase activity"/>
    <property type="evidence" value="ECO:0007669"/>
    <property type="project" value="UniProtKB-UniRule"/>
</dbReference>
<dbReference type="GO" id="GO:0006207">
    <property type="term" value="P:'de novo' pyrimidine nucleobase biosynthetic process"/>
    <property type="evidence" value="ECO:0007669"/>
    <property type="project" value="InterPro"/>
</dbReference>
<dbReference type="GO" id="GO:0044205">
    <property type="term" value="P:'de novo' UMP biosynthetic process"/>
    <property type="evidence" value="ECO:0007669"/>
    <property type="project" value="UniProtKB-UniRule"/>
</dbReference>
<dbReference type="GO" id="GO:0006520">
    <property type="term" value="P:amino acid metabolic process"/>
    <property type="evidence" value="ECO:0007669"/>
    <property type="project" value="InterPro"/>
</dbReference>
<dbReference type="FunFam" id="3.40.50.1370:FF:000007">
    <property type="entry name" value="Aspartate carbamoyltransferase"/>
    <property type="match status" value="1"/>
</dbReference>
<dbReference type="Gene3D" id="3.40.50.1370">
    <property type="entry name" value="Aspartate/ornithine carbamoyltransferase"/>
    <property type="match status" value="2"/>
</dbReference>
<dbReference type="HAMAP" id="MF_00001">
    <property type="entry name" value="Asp_carb_tr"/>
    <property type="match status" value="1"/>
</dbReference>
<dbReference type="InterPro" id="IPR006132">
    <property type="entry name" value="Asp/Orn_carbamoyltranf_P-bd"/>
</dbReference>
<dbReference type="InterPro" id="IPR006130">
    <property type="entry name" value="Asp/Orn_carbamoylTrfase"/>
</dbReference>
<dbReference type="InterPro" id="IPR036901">
    <property type="entry name" value="Asp/Orn_carbamoylTrfase_sf"/>
</dbReference>
<dbReference type="InterPro" id="IPR002082">
    <property type="entry name" value="Asp_carbamoyltransf"/>
</dbReference>
<dbReference type="InterPro" id="IPR006131">
    <property type="entry name" value="Asp_carbamoyltransf_Asp/Orn-bd"/>
</dbReference>
<dbReference type="NCBIfam" id="TIGR00670">
    <property type="entry name" value="asp_carb_tr"/>
    <property type="match status" value="1"/>
</dbReference>
<dbReference type="NCBIfam" id="NF002032">
    <property type="entry name" value="PRK00856.1"/>
    <property type="match status" value="1"/>
</dbReference>
<dbReference type="PANTHER" id="PTHR45753:SF6">
    <property type="entry name" value="ASPARTATE CARBAMOYLTRANSFERASE"/>
    <property type="match status" value="1"/>
</dbReference>
<dbReference type="PANTHER" id="PTHR45753">
    <property type="entry name" value="ORNITHINE CARBAMOYLTRANSFERASE, MITOCHONDRIAL"/>
    <property type="match status" value="1"/>
</dbReference>
<dbReference type="Pfam" id="PF00185">
    <property type="entry name" value="OTCace"/>
    <property type="match status" value="1"/>
</dbReference>
<dbReference type="Pfam" id="PF02729">
    <property type="entry name" value="OTCace_N"/>
    <property type="match status" value="1"/>
</dbReference>
<dbReference type="PRINTS" id="PR00100">
    <property type="entry name" value="AOTCASE"/>
</dbReference>
<dbReference type="PRINTS" id="PR00101">
    <property type="entry name" value="ATCASE"/>
</dbReference>
<dbReference type="SUPFAM" id="SSF53671">
    <property type="entry name" value="Aspartate/ornithine carbamoyltransferase"/>
    <property type="match status" value="1"/>
</dbReference>
<dbReference type="PROSITE" id="PS00097">
    <property type="entry name" value="CARBAMOYLTRANSFERASE"/>
    <property type="match status" value="1"/>
</dbReference>
<name>PYRB_CHESB</name>
<organism>
    <name type="scientific">Chelativorans sp. (strain BNC1)</name>
    <dbReference type="NCBI Taxonomy" id="266779"/>
    <lineage>
        <taxon>Bacteria</taxon>
        <taxon>Pseudomonadati</taxon>
        <taxon>Pseudomonadota</taxon>
        <taxon>Alphaproteobacteria</taxon>
        <taxon>Hyphomicrobiales</taxon>
        <taxon>Phyllobacteriaceae</taxon>
        <taxon>Chelativorans</taxon>
    </lineage>
</organism>
<feature type="chain" id="PRO_0000301587" description="Aspartate carbamoyltransferase catalytic subunit">
    <location>
        <begin position="1"/>
        <end position="319"/>
    </location>
</feature>
<feature type="binding site" evidence="1">
    <location>
        <position position="65"/>
    </location>
    <ligand>
        <name>carbamoyl phosphate</name>
        <dbReference type="ChEBI" id="CHEBI:58228"/>
    </ligand>
</feature>
<feature type="binding site" evidence="1">
    <location>
        <position position="66"/>
    </location>
    <ligand>
        <name>carbamoyl phosphate</name>
        <dbReference type="ChEBI" id="CHEBI:58228"/>
    </ligand>
</feature>
<feature type="binding site" evidence="1">
    <location>
        <position position="93"/>
    </location>
    <ligand>
        <name>L-aspartate</name>
        <dbReference type="ChEBI" id="CHEBI:29991"/>
    </ligand>
</feature>
<feature type="binding site" evidence="1">
    <location>
        <position position="115"/>
    </location>
    <ligand>
        <name>carbamoyl phosphate</name>
        <dbReference type="ChEBI" id="CHEBI:58228"/>
    </ligand>
</feature>
<feature type="binding site" evidence="1">
    <location>
        <position position="143"/>
    </location>
    <ligand>
        <name>carbamoyl phosphate</name>
        <dbReference type="ChEBI" id="CHEBI:58228"/>
    </ligand>
</feature>
<feature type="binding site" evidence="1">
    <location>
        <position position="146"/>
    </location>
    <ligand>
        <name>carbamoyl phosphate</name>
        <dbReference type="ChEBI" id="CHEBI:58228"/>
    </ligand>
</feature>
<feature type="binding site" evidence="1">
    <location>
        <position position="176"/>
    </location>
    <ligand>
        <name>L-aspartate</name>
        <dbReference type="ChEBI" id="CHEBI:29991"/>
    </ligand>
</feature>
<feature type="binding site" evidence="1">
    <location>
        <position position="230"/>
    </location>
    <ligand>
        <name>L-aspartate</name>
        <dbReference type="ChEBI" id="CHEBI:29991"/>
    </ligand>
</feature>
<feature type="binding site" evidence="1">
    <location>
        <position position="271"/>
    </location>
    <ligand>
        <name>carbamoyl phosphate</name>
        <dbReference type="ChEBI" id="CHEBI:58228"/>
    </ligand>
</feature>
<feature type="binding site" evidence="1">
    <location>
        <position position="272"/>
    </location>
    <ligand>
        <name>carbamoyl phosphate</name>
        <dbReference type="ChEBI" id="CHEBI:58228"/>
    </ligand>
</feature>
<reference key="1">
    <citation type="submission" date="2006-06" db="EMBL/GenBank/DDBJ databases">
        <title>Complete sequence of chromosome of Mesorhizobium sp. BNC1.</title>
        <authorList>
            <consortium name="US DOE Joint Genome Institute"/>
            <person name="Copeland A."/>
            <person name="Lucas S."/>
            <person name="Lapidus A."/>
            <person name="Barry K."/>
            <person name="Detter J.C."/>
            <person name="Glavina del Rio T."/>
            <person name="Hammon N."/>
            <person name="Israni S."/>
            <person name="Dalin E."/>
            <person name="Tice H."/>
            <person name="Pitluck S."/>
            <person name="Chertkov O."/>
            <person name="Brettin T."/>
            <person name="Bruce D."/>
            <person name="Han C."/>
            <person name="Tapia R."/>
            <person name="Gilna P."/>
            <person name="Schmutz J."/>
            <person name="Larimer F."/>
            <person name="Land M."/>
            <person name="Hauser L."/>
            <person name="Kyrpides N."/>
            <person name="Mikhailova N."/>
            <person name="Richardson P."/>
        </authorList>
    </citation>
    <scope>NUCLEOTIDE SEQUENCE [LARGE SCALE GENOMIC DNA]</scope>
    <source>
        <strain>BNC1</strain>
    </source>
</reference>
<proteinExistence type="inferred from homology"/>
<evidence type="ECO:0000255" key="1">
    <source>
        <dbReference type="HAMAP-Rule" id="MF_00001"/>
    </source>
</evidence>
<sequence>MTDAPGFPLFPHPHLLGIKGLSPADIELLLERADAAVAISRRPEKKLATLRGRTQINLFFEASTRTQSSFELAGKRLGADVMNMSVASSSTKKGETLLDTAMTLNAMRPDILVVRHSAAGAAALLAQKVGCSVVNAGDGAHEHPTQALLDALTIRRKKGSIAGLVVAICGDVLHSRVARSNILLLNALGARVRVIAPSTLLPSGIGQMGVEPFTKMGEGLAGADVVMMLRLQRERMAGTFVPSVREYFRFFGLDAEKLKAAKEDALVMHPGPMNRGVEIASEVADGPQSVIQEQVEMGVAVRMAVMEALLDPRRNGDGA</sequence>
<protein>
    <recommendedName>
        <fullName evidence="1">Aspartate carbamoyltransferase catalytic subunit</fullName>
        <ecNumber evidence="1">2.1.3.2</ecNumber>
    </recommendedName>
    <alternativeName>
        <fullName evidence="1">Aspartate transcarbamylase</fullName>
        <shortName evidence="1">ATCase</shortName>
    </alternativeName>
</protein>
<gene>
    <name evidence="1" type="primary">pyrB</name>
    <name type="ordered locus">Meso_1359</name>
</gene>